<dbReference type="EC" id="2.3.3.13" evidence="1"/>
<dbReference type="EMBL" id="CP000440">
    <property type="protein sequence ID" value="ABI87854.1"/>
    <property type="molecule type" value="Genomic_DNA"/>
</dbReference>
<dbReference type="RefSeq" id="WP_011657491.1">
    <property type="nucleotide sequence ID" value="NC_008390.1"/>
</dbReference>
<dbReference type="SMR" id="Q0BDB9"/>
<dbReference type="GeneID" id="93085494"/>
<dbReference type="KEGG" id="bam:Bamb_2298"/>
<dbReference type="PATRIC" id="fig|339670.21.peg.2629"/>
<dbReference type="eggNOG" id="COG0119">
    <property type="taxonomic scope" value="Bacteria"/>
</dbReference>
<dbReference type="UniPathway" id="UPA00048">
    <property type="reaction ID" value="UER00070"/>
</dbReference>
<dbReference type="Proteomes" id="UP000000662">
    <property type="component" value="Chromosome 1"/>
</dbReference>
<dbReference type="GO" id="GO:0005829">
    <property type="term" value="C:cytosol"/>
    <property type="evidence" value="ECO:0007669"/>
    <property type="project" value="TreeGrafter"/>
</dbReference>
<dbReference type="GO" id="GO:0003852">
    <property type="term" value="F:2-isopropylmalate synthase activity"/>
    <property type="evidence" value="ECO:0007669"/>
    <property type="project" value="UniProtKB-UniRule"/>
</dbReference>
<dbReference type="GO" id="GO:0003985">
    <property type="term" value="F:acetyl-CoA C-acetyltransferase activity"/>
    <property type="evidence" value="ECO:0007669"/>
    <property type="project" value="UniProtKB-UniRule"/>
</dbReference>
<dbReference type="GO" id="GO:0030145">
    <property type="term" value="F:manganese ion binding"/>
    <property type="evidence" value="ECO:0007669"/>
    <property type="project" value="UniProtKB-UniRule"/>
</dbReference>
<dbReference type="GO" id="GO:0009098">
    <property type="term" value="P:L-leucine biosynthetic process"/>
    <property type="evidence" value="ECO:0007669"/>
    <property type="project" value="UniProtKB-UniRule"/>
</dbReference>
<dbReference type="CDD" id="cd07940">
    <property type="entry name" value="DRE_TIM_IPMS"/>
    <property type="match status" value="1"/>
</dbReference>
<dbReference type="FunFam" id="1.10.238.260:FF:000001">
    <property type="entry name" value="2-isopropylmalate synthase"/>
    <property type="match status" value="1"/>
</dbReference>
<dbReference type="FunFam" id="3.20.20.70:FF:000010">
    <property type="entry name" value="2-isopropylmalate synthase"/>
    <property type="match status" value="1"/>
</dbReference>
<dbReference type="FunFam" id="3.30.160.270:FF:000003">
    <property type="entry name" value="2-isopropylmalate synthase"/>
    <property type="match status" value="1"/>
</dbReference>
<dbReference type="Gene3D" id="1.10.238.260">
    <property type="match status" value="1"/>
</dbReference>
<dbReference type="Gene3D" id="3.30.160.270">
    <property type="match status" value="1"/>
</dbReference>
<dbReference type="Gene3D" id="3.20.20.70">
    <property type="entry name" value="Aldolase class I"/>
    <property type="match status" value="1"/>
</dbReference>
<dbReference type="HAMAP" id="MF_01025">
    <property type="entry name" value="LeuA_type1"/>
    <property type="match status" value="1"/>
</dbReference>
<dbReference type="InterPro" id="IPR050073">
    <property type="entry name" value="2-IPM_HCS-like"/>
</dbReference>
<dbReference type="InterPro" id="IPR013709">
    <property type="entry name" value="2-isopropylmalate_synth_dimer"/>
</dbReference>
<dbReference type="InterPro" id="IPR002034">
    <property type="entry name" value="AIPM/Hcit_synth_CS"/>
</dbReference>
<dbReference type="InterPro" id="IPR013785">
    <property type="entry name" value="Aldolase_TIM"/>
</dbReference>
<dbReference type="InterPro" id="IPR054691">
    <property type="entry name" value="LeuA/HCS_post-cat"/>
</dbReference>
<dbReference type="InterPro" id="IPR036230">
    <property type="entry name" value="LeuA_allosteric_dom_sf"/>
</dbReference>
<dbReference type="InterPro" id="IPR005671">
    <property type="entry name" value="LeuA_bact_synth"/>
</dbReference>
<dbReference type="InterPro" id="IPR000891">
    <property type="entry name" value="PYR_CT"/>
</dbReference>
<dbReference type="NCBIfam" id="TIGR00973">
    <property type="entry name" value="leuA_bact"/>
    <property type="match status" value="1"/>
</dbReference>
<dbReference type="NCBIfam" id="NF002086">
    <property type="entry name" value="PRK00915.1-3"/>
    <property type="match status" value="1"/>
</dbReference>
<dbReference type="NCBIfam" id="NF002087">
    <property type="entry name" value="PRK00915.1-4"/>
    <property type="match status" value="1"/>
</dbReference>
<dbReference type="PANTHER" id="PTHR10277:SF9">
    <property type="entry name" value="2-ISOPROPYLMALATE SYNTHASE 1, CHLOROPLASTIC-RELATED"/>
    <property type="match status" value="1"/>
</dbReference>
<dbReference type="PANTHER" id="PTHR10277">
    <property type="entry name" value="HOMOCITRATE SYNTHASE-RELATED"/>
    <property type="match status" value="1"/>
</dbReference>
<dbReference type="Pfam" id="PF22617">
    <property type="entry name" value="HCS_D2"/>
    <property type="match status" value="1"/>
</dbReference>
<dbReference type="Pfam" id="PF00682">
    <property type="entry name" value="HMGL-like"/>
    <property type="match status" value="1"/>
</dbReference>
<dbReference type="Pfam" id="PF08502">
    <property type="entry name" value="LeuA_dimer"/>
    <property type="match status" value="1"/>
</dbReference>
<dbReference type="SMART" id="SM00917">
    <property type="entry name" value="LeuA_dimer"/>
    <property type="match status" value="1"/>
</dbReference>
<dbReference type="SUPFAM" id="SSF110921">
    <property type="entry name" value="2-isopropylmalate synthase LeuA, allosteric (dimerisation) domain"/>
    <property type="match status" value="1"/>
</dbReference>
<dbReference type="SUPFAM" id="SSF51569">
    <property type="entry name" value="Aldolase"/>
    <property type="match status" value="1"/>
</dbReference>
<dbReference type="PROSITE" id="PS00815">
    <property type="entry name" value="AIPM_HOMOCIT_SYNTH_1"/>
    <property type="match status" value="1"/>
</dbReference>
<dbReference type="PROSITE" id="PS00816">
    <property type="entry name" value="AIPM_HOMOCIT_SYNTH_2"/>
    <property type="match status" value="1"/>
</dbReference>
<dbReference type="PROSITE" id="PS50991">
    <property type="entry name" value="PYR_CT"/>
    <property type="match status" value="1"/>
</dbReference>
<feature type="chain" id="PRO_1000149149" description="2-isopropylmalate synthase">
    <location>
        <begin position="1"/>
        <end position="514"/>
    </location>
</feature>
<feature type="domain" description="Pyruvate carboxyltransferase" evidence="1">
    <location>
        <begin position="5"/>
        <end position="268"/>
    </location>
</feature>
<feature type="region of interest" description="Regulatory domain" evidence="1">
    <location>
        <begin position="395"/>
        <end position="514"/>
    </location>
</feature>
<feature type="binding site" evidence="1">
    <location>
        <position position="14"/>
    </location>
    <ligand>
        <name>Mn(2+)</name>
        <dbReference type="ChEBI" id="CHEBI:29035"/>
    </ligand>
</feature>
<feature type="binding site" evidence="1">
    <location>
        <position position="202"/>
    </location>
    <ligand>
        <name>Mn(2+)</name>
        <dbReference type="ChEBI" id="CHEBI:29035"/>
    </ligand>
</feature>
<feature type="binding site" evidence="1">
    <location>
        <position position="204"/>
    </location>
    <ligand>
        <name>Mn(2+)</name>
        <dbReference type="ChEBI" id="CHEBI:29035"/>
    </ligand>
</feature>
<feature type="binding site" evidence="1">
    <location>
        <position position="239"/>
    </location>
    <ligand>
        <name>Mn(2+)</name>
        <dbReference type="ChEBI" id="CHEBI:29035"/>
    </ligand>
</feature>
<protein>
    <recommendedName>
        <fullName evidence="1">2-isopropylmalate synthase</fullName>
        <ecNumber evidence="1">2.3.3.13</ecNumber>
    </recommendedName>
    <alternativeName>
        <fullName evidence="1">Alpha-IPM synthase</fullName>
    </alternativeName>
    <alternativeName>
        <fullName evidence="1">Alpha-isopropylmalate synthase</fullName>
    </alternativeName>
</protein>
<comment type="function">
    <text evidence="1">Catalyzes the condensation of the acetyl group of acetyl-CoA with 3-methyl-2-oxobutanoate (2-ketoisovalerate) to form 3-carboxy-3-hydroxy-4-methylpentanoate (2-isopropylmalate).</text>
</comment>
<comment type="catalytic activity">
    <reaction evidence="1">
        <text>3-methyl-2-oxobutanoate + acetyl-CoA + H2O = (2S)-2-isopropylmalate + CoA + H(+)</text>
        <dbReference type="Rhea" id="RHEA:21524"/>
        <dbReference type="ChEBI" id="CHEBI:1178"/>
        <dbReference type="ChEBI" id="CHEBI:11851"/>
        <dbReference type="ChEBI" id="CHEBI:15377"/>
        <dbReference type="ChEBI" id="CHEBI:15378"/>
        <dbReference type="ChEBI" id="CHEBI:57287"/>
        <dbReference type="ChEBI" id="CHEBI:57288"/>
        <dbReference type="EC" id="2.3.3.13"/>
    </reaction>
</comment>
<comment type="cofactor">
    <cofactor evidence="1">
        <name>Mn(2+)</name>
        <dbReference type="ChEBI" id="CHEBI:29035"/>
    </cofactor>
</comment>
<comment type="pathway">
    <text evidence="1">Amino-acid biosynthesis; L-leucine biosynthesis; L-leucine from 3-methyl-2-oxobutanoate: step 1/4.</text>
</comment>
<comment type="subunit">
    <text evidence="1">Homodimer.</text>
</comment>
<comment type="subcellular location">
    <subcellularLocation>
        <location evidence="1">Cytoplasm</location>
    </subcellularLocation>
</comment>
<comment type="similarity">
    <text evidence="1">Belongs to the alpha-IPM synthase/homocitrate synthase family. LeuA type 1 subfamily.</text>
</comment>
<gene>
    <name evidence="1" type="primary">leuA</name>
    <name type="ordered locus">Bamb_2298</name>
</gene>
<evidence type="ECO:0000255" key="1">
    <source>
        <dbReference type="HAMAP-Rule" id="MF_01025"/>
    </source>
</evidence>
<sequence>MTDKLIIFDTTLRDGEQSPGASMTKEEKIRIAKHLERMKVDVIEAGFAASSNGDFDAIHTIAGLVKDSTICSLARANDKDIQRAADALKPANSARIHTFIATSPLHMEKKLRMTPDQVFEQARLAVRFARKFTDNVEFSPEDGSRSDLDFLCRVLEAVIAEGATTINIADTVGYGVPELYGNLVKTLRERIPNSDKAIFSVHCHNDLGMAVANSLAGVKIGGARQVECTINGLGERAGNTSLEEIVMAVKTRKDYFGLDVGLDTTQIVPTSKLVSQITGFVVQPNKAVVGANAFAHASGIHQDGVLKARDTYEIMRAEDVGWTANKIVLGKLSGRNAFKQRLQELGVSLDSETELNAAFMRFKDLADRKSDIFDEDIIAIVSEESAFAQEQEHYKFVSLSQRSETGEQPQAKVVLALDGKEVTGEARGNGPVDATFNAIEGEVGSGSELLLYSVNAITTGTQAQGEVTVRLSKSGRIVNGVGTDPDIVAASAKAYIAALNKLHSKDDKLNPQRS</sequence>
<accession>Q0BDB9</accession>
<keyword id="KW-0028">Amino-acid biosynthesis</keyword>
<keyword id="KW-0100">Branched-chain amino acid biosynthesis</keyword>
<keyword id="KW-0963">Cytoplasm</keyword>
<keyword id="KW-0432">Leucine biosynthesis</keyword>
<keyword id="KW-0464">Manganese</keyword>
<keyword id="KW-0479">Metal-binding</keyword>
<keyword id="KW-0808">Transferase</keyword>
<proteinExistence type="inferred from homology"/>
<organism>
    <name type="scientific">Burkholderia ambifaria (strain ATCC BAA-244 / DSM 16087 / CCUG 44356 / LMG 19182 / AMMD)</name>
    <name type="common">Burkholderia cepacia (strain AMMD)</name>
    <dbReference type="NCBI Taxonomy" id="339670"/>
    <lineage>
        <taxon>Bacteria</taxon>
        <taxon>Pseudomonadati</taxon>
        <taxon>Pseudomonadota</taxon>
        <taxon>Betaproteobacteria</taxon>
        <taxon>Burkholderiales</taxon>
        <taxon>Burkholderiaceae</taxon>
        <taxon>Burkholderia</taxon>
        <taxon>Burkholderia cepacia complex</taxon>
    </lineage>
</organism>
<reference key="1">
    <citation type="submission" date="2006-08" db="EMBL/GenBank/DDBJ databases">
        <title>Complete sequence of chromosome 1 of Burkholderia cepacia AMMD.</title>
        <authorList>
            <person name="Copeland A."/>
            <person name="Lucas S."/>
            <person name="Lapidus A."/>
            <person name="Barry K."/>
            <person name="Detter J.C."/>
            <person name="Glavina del Rio T."/>
            <person name="Hammon N."/>
            <person name="Israni S."/>
            <person name="Pitluck S."/>
            <person name="Bruce D."/>
            <person name="Chain P."/>
            <person name="Malfatti S."/>
            <person name="Shin M."/>
            <person name="Vergez L."/>
            <person name="Schmutz J."/>
            <person name="Larimer F."/>
            <person name="Land M."/>
            <person name="Hauser L."/>
            <person name="Kyrpides N."/>
            <person name="Kim E."/>
            <person name="Parke J."/>
            <person name="Coenye T."/>
            <person name="Konstantinidis K."/>
            <person name="Ramette A."/>
            <person name="Tiedje J."/>
            <person name="Richardson P."/>
        </authorList>
    </citation>
    <scope>NUCLEOTIDE SEQUENCE [LARGE SCALE GENOMIC DNA]</scope>
    <source>
        <strain>ATCC BAA-244 / DSM 16087 / CCUG 44356 / LMG 19182 / AMMD</strain>
    </source>
</reference>
<name>LEU1_BURCM</name>